<comment type="function">
    <text evidence="1">Catalyzes the first step in the D-alanylation of lipoteichoic acid (LTA), the activation of D-alanine and its transfer onto the D-alanyl carrier protein (Dcp) DltC. In an ATP-dependent two-step reaction, forms a high energy D-alanyl-AMP intermediate, followed by transfer of the D-alanyl residue as a thiol ester to the phosphopantheinyl prosthetic group of the Dcp. D-alanylation of LTA plays an important role in modulating the properties of the cell wall in Gram-positive bacteria, influencing the net charge of the cell wall.</text>
</comment>
<comment type="catalytic activity">
    <reaction evidence="1">
        <text>holo-[D-alanyl-carrier protein] + D-alanine + ATP = D-alanyl-[D-alanyl-carrier protein] + AMP + diphosphate</text>
        <dbReference type="Rhea" id="RHEA:55132"/>
        <dbReference type="Rhea" id="RHEA-COMP:14102"/>
        <dbReference type="Rhea" id="RHEA-COMP:14103"/>
        <dbReference type="ChEBI" id="CHEBI:30616"/>
        <dbReference type="ChEBI" id="CHEBI:33019"/>
        <dbReference type="ChEBI" id="CHEBI:57416"/>
        <dbReference type="ChEBI" id="CHEBI:64479"/>
        <dbReference type="ChEBI" id="CHEBI:138620"/>
        <dbReference type="ChEBI" id="CHEBI:456215"/>
        <dbReference type="EC" id="6.2.1.54"/>
    </reaction>
</comment>
<comment type="pathway">
    <text evidence="1">Cell wall biogenesis; lipoteichoic acid biosynthesis.</text>
</comment>
<comment type="subcellular location">
    <subcellularLocation>
        <location evidence="1">Cytoplasm</location>
    </subcellularLocation>
</comment>
<comment type="similarity">
    <text evidence="1">Belongs to the ATP-dependent AMP-binding enzyme family. DltA subfamily.</text>
</comment>
<protein>
    <recommendedName>
        <fullName evidence="1">D-alanine--D-alanyl carrier protein ligase</fullName>
        <shortName evidence="1">DCL</shortName>
        <ecNumber evidence="1">6.2.1.54</ecNumber>
    </recommendedName>
    <alternativeName>
        <fullName evidence="1">D-alanine--poly(phosphoribitol) ligase subunit 1</fullName>
    </alternativeName>
    <alternativeName>
        <fullName evidence="1">D-alanine-activating enzyme</fullName>
        <shortName evidence="1">DAE</shortName>
    </alternativeName>
</protein>
<gene>
    <name evidence="1" type="primary">dltA</name>
    <name type="ordered locus">LCABL_08550</name>
</gene>
<organism>
    <name type="scientific">Lacticaseibacillus casei (strain BL23)</name>
    <name type="common">Lactobacillus casei</name>
    <dbReference type="NCBI Taxonomy" id="543734"/>
    <lineage>
        <taxon>Bacteria</taxon>
        <taxon>Bacillati</taxon>
        <taxon>Bacillota</taxon>
        <taxon>Bacilli</taxon>
        <taxon>Lactobacillales</taxon>
        <taxon>Lactobacillaceae</taxon>
        <taxon>Lacticaseibacillus</taxon>
    </lineage>
</organism>
<reference key="1">
    <citation type="submission" date="2008-06" db="EMBL/GenBank/DDBJ databases">
        <title>Lactobacillus casei BL23 complete genome sequence.</title>
        <authorList>
            <person name="Maze A."/>
            <person name="Boel G."/>
            <person name="Bourand A."/>
            <person name="Loux V."/>
            <person name="Gibrat J.F."/>
            <person name="Zuniga M."/>
            <person name="Hartke A."/>
            <person name="Deutscher J."/>
        </authorList>
    </citation>
    <scope>NUCLEOTIDE SEQUENCE [LARGE SCALE GENOMIC DNA]</scope>
    <source>
        <strain>BL23</strain>
    </source>
</reference>
<keyword id="KW-0067">ATP-binding</keyword>
<keyword id="KW-0963">Cytoplasm</keyword>
<keyword id="KW-0436">Ligase</keyword>
<keyword id="KW-0547">Nucleotide-binding</keyword>
<sequence>MIDNVITAIDRVAAEHPTRVAYDYEGTQYTYAQLKEGSDRLAGFFAETLPEHEPIIVYGGQTFDMVEVFLGLSKSGHAYIPIDTHSPNERITQVQDVAHTPAIIEVAPLPIAVPDVQIIRAPELHEAEKTHALISSLQHAVVGDDNYYIIFTSGTTGKPKGVQISHDNLLSYVNWNISDFGLKEGVVAMSQPPYSFDLSVMDLYPTLVLGGTLKALPKEVTDNFKTLFATLPKLGLNEWVSTPSFAEIALLDPNFNQDNYPDLTHFLFCGEELVNKTAQELITRFPKATVYNTYGPTETTVAVTGMAITQDIVDQYPRLPIGFAKPDTEIFVVDEQGNQVSAGTEGELMIVGPSVSKGYLNNPEKTAKAFFNVGSQRGYRSGDLATMTEDGMIFYRGRTDFQVKLHGYRIELEDVDHNLNQVSYIKQASTVPRYNKDHKVAQLIAFAVAKPNDFESDMKLTQAVKAELGKMVMEYMIPQRIIYRDKLPLTANGKVDRKALIAEVNH</sequence>
<accession>B3WC77</accession>
<evidence type="ECO:0000255" key="1">
    <source>
        <dbReference type="HAMAP-Rule" id="MF_00593"/>
    </source>
</evidence>
<dbReference type="EC" id="6.2.1.54" evidence="1"/>
<dbReference type="EMBL" id="FM177140">
    <property type="protein sequence ID" value="CAQ65978.1"/>
    <property type="molecule type" value="Genomic_DNA"/>
</dbReference>
<dbReference type="SMR" id="B3WC77"/>
<dbReference type="KEGG" id="lcb:LCABL_08550"/>
<dbReference type="HOGENOM" id="CLU_000022_2_12_9"/>
<dbReference type="UniPathway" id="UPA00556"/>
<dbReference type="GO" id="GO:0005737">
    <property type="term" value="C:cytoplasm"/>
    <property type="evidence" value="ECO:0007669"/>
    <property type="project" value="UniProtKB-SubCell"/>
</dbReference>
<dbReference type="GO" id="GO:0005524">
    <property type="term" value="F:ATP binding"/>
    <property type="evidence" value="ECO:0007669"/>
    <property type="project" value="UniProtKB-KW"/>
</dbReference>
<dbReference type="GO" id="GO:0047473">
    <property type="term" value="F:D-alanine [D-alanyl carrier protein] ligase activity"/>
    <property type="evidence" value="ECO:0007669"/>
    <property type="project" value="UniProtKB-UniRule"/>
</dbReference>
<dbReference type="GO" id="GO:0070395">
    <property type="term" value="P:lipoteichoic acid biosynthetic process"/>
    <property type="evidence" value="ECO:0007669"/>
    <property type="project" value="UniProtKB-UniRule"/>
</dbReference>
<dbReference type="CDD" id="cd05945">
    <property type="entry name" value="DltA"/>
    <property type="match status" value="1"/>
</dbReference>
<dbReference type="FunFam" id="3.30.300.30:FF:000012">
    <property type="entry name" value="D-alanine--D-alanyl carrier protein ligase"/>
    <property type="match status" value="1"/>
</dbReference>
<dbReference type="Gene3D" id="3.30.300.30">
    <property type="match status" value="1"/>
</dbReference>
<dbReference type="Gene3D" id="3.40.50.12780">
    <property type="entry name" value="N-terminal domain of ligase-like"/>
    <property type="match status" value="1"/>
</dbReference>
<dbReference type="HAMAP" id="MF_00593">
    <property type="entry name" value="DltA"/>
    <property type="match status" value="1"/>
</dbReference>
<dbReference type="InterPro" id="IPR010071">
    <property type="entry name" value="AA_adenyl_dom"/>
</dbReference>
<dbReference type="InterPro" id="IPR025110">
    <property type="entry name" value="AMP-bd_C"/>
</dbReference>
<dbReference type="InterPro" id="IPR045851">
    <property type="entry name" value="AMP-bd_C_sf"/>
</dbReference>
<dbReference type="InterPro" id="IPR020845">
    <property type="entry name" value="AMP-binding_CS"/>
</dbReference>
<dbReference type="InterPro" id="IPR000873">
    <property type="entry name" value="AMP-dep_synth/lig_dom"/>
</dbReference>
<dbReference type="InterPro" id="IPR042099">
    <property type="entry name" value="ANL_N_sf"/>
</dbReference>
<dbReference type="InterPro" id="IPR010072">
    <property type="entry name" value="DltA"/>
</dbReference>
<dbReference type="InterPro" id="IPR044507">
    <property type="entry name" value="DltA-like"/>
</dbReference>
<dbReference type="NCBIfam" id="TIGR01733">
    <property type="entry name" value="AA-adenyl-dom"/>
    <property type="match status" value="1"/>
</dbReference>
<dbReference type="NCBIfam" id="TIGR01734">
    <property type="entry name" value="D-ala-DACP-lig"/>
    <property type="match status" value="1"/>
</dbReference>
<dbReference type="NCBIfam" id="NF003417">
    <property type="entry name" value="PRK04813.1"/>
    <property type="match status" value="1"/>
</dbReference>
<dbReference type="PANTHER" id="PTHR45398">
    <property type="match status" value="1"/>
</dbReference>
<dbReference type="PANTHER" id="PTHR45398:SF1">
    <property type="entry name" value="ENZYME, PUTATIVE (JCVI)-RELATED"/>
    <property type="match status" value="1"/>
</dbReference>
<dbReference type="Pfam" id="PF00501">
    <property type="entry name" value="AMP-binding"/>
    <property type="match status" value="1"/>
</dbReference>
<dbReference type="Pfam" id="PF13193">
    <property type="entry name" value="AMP-binding_C"/>
    <property type="match status" value="1"/>
</dbReference>
<dbReference type="SUPFAM" id="SSF56801">
    <property type="entry name" value="Acetyl-CoA synthetase-like"/>
    <property type="match status" value="1"/>
</dbReference>
<dbReference type="PROSITE" id="PS00455">
    <property type="entry name" value="AMP_BINDING"/>
    <property type="match status" value="1"/>
</dbReference>
<proteinExistence type="inferred from homology"/>
<name>DLTA_LACCB</name>
<feature type="chain" id="PRO_1000129822" description="D-alanine--D-alanyl carrier protein ligase">
    <location>
        <begin position="1"/>
        <end position="506"/>
    </location>
</feature>
<feature type="binding site" evidence="1">
    <location>
        <begin position="152"/>
        <end position="153"/>
    </location>
    <ligand>
        <name>ATP</name>
        <dbReference type="ChEBI" id="CHEBI:30616"/>
    </ligand>
</feature>
<feature type="binding site" evidence="1">
    <location>
        <position position="197"/>
    </location>
    <ligand>
        <name>D-alanine</name>
        <dbReference type="ChEBI" id="CHEBI:57416"/>
    </ligand>
</feature>
<feature type="binding site" evidence="1">
    <location>
        <begin position="292"/>
        <end position="297"/>
    </location>
    <ligand>
        <name>ATP</name>
        <dbReference type="ChEBI" id="CHEBI:30616"/>
    </ligand>
</feature>
<feature type="binding site" evidence="1">
    <location>
        <position position="301"/>
    </location>
    <ligand>
        <name>D-alanine</name>
        <dbReference type="ChEBI" id="CHEBI:57416"/>
    </ligand>
</feature>
<feature type="binding site" evidence="1">
    <location>
        <position position="383"/>
    </location>
    <ligand>
        <name>ATP</name>
        <dbReference type="ChEBI" id="CHEBI:30616"/>
    </ligand>
</feature>
<feature type="binding site" evidence="1">
    <location>
        <begin position="395"/>
        <end position="398"/>
    </location>
    <ligand>
        <name>ATP</name>
        <dbReference type="ChEBI" id="CHEBI:30616"/>
    </ligand>
</feature>
<feature type="binding site" evidence="1">
    <location>
        <position position="494"/>
    </location>
    <ligand>
        <name>ATP</name>
        <dbReference type="ChEBI" id="CHEBI:30616"/>
    </ligand>
</feature>
<feature type="binding site" evidence="1">
    <location>
        <position position="494"/>
    </location>
    <ligand>
        <name>D-alanine</name>
        <dbReference type="ChEBI" id="CHEBI:57416"/>
    </ligand>
</feature>